<evidence type="ECO:0000255" key="1">
    <source>
        <dbReference type="HAMAP-Rule" id="MF_00540"/>
    </source>
</evidence>
<sequence length="335" mass="37691">MNFKKLPKIELHCHLDGSLRVDTILDIAKKDNIPLPSYNKKELINYVSIMDDCNSLDEYLNKFFIPNKVMQTKENLKRIAFELLEDVAADNVKYIEVRFAPLLHVEKGLNIEEIIESVLEGIKEAEKLYDIKGNLILGCMRNMDIPSAFEVVKKGAKFIGKGVVAIDLCAGEEPHFPGKYIEVLKLAKECGYRITIHAGEAGVGENVLEAINLLNAERIGHGIYIKDCAEAYKLVKEKNIPLEVCPTSNLHTKAFESYETHPFMDFLKDGIKVTINTDNMTVSNTTITKELEMLNKFCGLSIGDYKILYLNAVEASFASSETKKMLKSYVKEITG</sequence>
<organism>
    <name type="scientific">Clostridium botulinum (strain Langeland / NCTC 10281 / Type F)</name>
    <dbReference type="NCBI Taxonomy" id="441772"/>
    <lineage>
        <taxon>Bacteria</taxon>
        <taxon>Bacillati</taxon>
        <taxon>Bacillota</taxon>
        <taxon>Clostridia</taxon>
        <taxon>Eubacteriales</taxon>
        <taxon>Clostridiaceae</taxon>
        <taxon>Clostridium</taxon>
    </lineage>
</organism>
<protein>
    <recommendedName>
        <fullName evidence="1">Adenosine deaminase</fullName>
        <ecNumber evidence="1">3.5.4.4</ecNumber>
    </recommendedName>
    <alternativeName>
        <fullName evidence="1">Adenosine aminohydrolase</fullName>
    </alternativeName>
</protein>
<accession>A7GC28</accession>
<comment type="function">
    <text evidence="1">Catalyzes the hydrolytic deamination of adenosine and 2-deoxyadenosine.</text>
</comment>
<comment type="catalytic activity">
    <reaction evidence="1">
        <text>adenosine + H2O + H(+) = inosine + NH4(+)</text>
        <dbReference type="Rhea" id="RHEA:24408"/>
        <dbReference type="ChEBI" id="CHEBI:15377"/>
        <dbReference type="ChEBI" id="CHEBI:15378"/>
        <dbReference type="ChEBI" id="CHEBI:16335"/>
        <dbReference type="ChEBI" id="CHEBI:17596"/>
        <dbReference type="ChEBI" id="CHEBI:28938"/>
        <dbReference type="EC" id="3.5.4.4"/>
    </reaction>
    <physiologicalReaction direction="left-to-right" evidence="1">
        <dbReference type="Rhea" id="RHEA:24409"/>
    </physiologicalReaction>
</comment>
<comment type="catalytic activity">
    <reaction evidence="1">
        <text>2'-deoxyadenosine + H2O + H(+) = 2'-deoxyinosine + NH4(+)</text>
        <dbReference type="Rhea" id="RHEA:28190"/>
        <dbReference type="ChEBI" id="CHEBI:15377"/>
        <dbReference type="ChEBI" id="CHEBI:15378"/>
        <dbReference type="ChEBI" id="CHEBI:17256"/>
        <dbReference type="ChEBI" id="CHEBI:28938"/>
        <dbReference type="ChEBI" id="CHEBI:28997"/>
        <dbReference type="EC" id="3.5.4.4"/>
    </reaction>
    <physiologicalReaction direction="left-to-right" evidence="1">
        <dbReference type="Rhea" id="RHEA:28191"/>
    </physiologicalReaction>
</comment>
<comment type="cofactor">
    <cofactor evidence="1">
        <name>Zn(2+)</name>
        <dbReference type="ChEBI" id="CHEBI:29105"/>
    </cofactor>
    <text evidence="1">Binds 1 zinc ion per subunit.</text>
</comment>
<comment type="similarity">
    <text evidence="1">Belongs to the metallo-dependent hydrolases superfamily. Adenosine and AMP deaminases family. Adenosine deaminase subfamily.</text>
</comment>
<dbReference type="EC" id="3.5.4.4" evidence="1"/>
<dbReference type="EMBL" id="CP000728">
    <property type="protein sequence ID" value="ABS40607.1"/>
    <property type="molecule type" value="Genomic_DNA"/>
</dbReference>
<dbReference type="RefSeq" id="WP_011987906.1">
    <property type="nucleotide sequence ID" value="NC_009699.1"/>
</dbReference>
<dbReference type="SMR" id="A7GC28"/>
<dbReference type="KEGG" id="cbf:CLI_1072"/>
<dbReference type="HOGENOM" id="CLU_039228_0_0_9"/>
<dbReference type="Proteomes" id="UP000002410">
    <property type="component" value="Chromosome"/>
</dbReference>
<dbReference type="GO" id="GO:0005829">
    <property type="term" value="C:cytosol"/>
    <property type="evidence" value="ECO:0007669"/>
    <property type="project" value="TreeGrafter"/>
</dbReference>
<dbReference type="GO" id="GO:0046936">
    <property type="term" value="F:2'-deoxyadenosine deaminase activity"/>
    <property type="evidence" value="ECO:0007669"/>
    <property type="project" value="RHEA"/>
</dbReference>
<dbReference type="GO" id="GO:0004000">
    <property type="term" value="F:adenosine deaminase activity"/>
    <property type="evidence" value="ECO:0007669"/>
    <property type="project" value="UniProtKB-UniRule"/>
</dbReference>
<dbReference type="GO" id="GO:0008270">
    <property type="term" value="F:zinc ion binding"/>
    <property type="evidence" value="ECO:0007669"/>
    <property type="project" value="UniProtKB-UniRule"/>
</dbReference>
<dbReference type="GO" id="GO:0006154">
    <property type="term" value="P:adenosine catabolic process"/>
    <property type="evidence" value="ECO:0007669"/>
    <property type="project" value="TreeGrafter"/>
</dbReference>
<dbReference type="GO" id="GO:0043103">
    <property type="term" value="P:hypoxanthine salvage"/>
    <property type="evidence" value="ECO:0007669"/>
    <property type="project" value="TreeGrafter"/>
</dbReference>
<dbReference type="GO" id="GO:0046103">
    <property type="term" value="P:inosine biosynthetic process"/>
    <property type="evidence" value="ECO:0007669"/>
    <property type="project" value="TreeGrafter"/>
</dbReference>
<dbReference type="GO" id="GO:0009117">
    <property type="term" value="P:nucleotide metabolic process"/>
    <property type="evidence" value="ECO:0007669"/>
    <property type="project" value="UniProtKB-KW"/>
</dbReference>
<dbReference type="GO" id="GO:0009168">
    <property type="term" value="P:purine ribonucleoside monophosphate biosynthetic process"/>
    <property type="evidence" value="ECO:0007669"/>
    <property type="project" value="UniProtKB-UniRule"/>
</dbReference>
<dbReference type="CDD" id="cd01320">
    <property type="entry name" value="ADA"/>
    <property type="match status" value="1"/>
</dbReference>
<dbReference type="FunFam" id="3.20.20.140:FF:000093">
    <property type="entry name" value="Adenosine deaminase"/>
    <property type="match status" value="1"/>
</dbReference>
<dbReference type="Gene3D" id="3.20.20.140">
    <property type="entry name" value="Metal-dependent hydrolases"/>
    <property type="match status" value="1"/>
</dbReference>
<dbReference type="HAMAP" id="MF_00540">
    <property type="entry name" value="A_deaminase"/>
    <property type="match status" value="1"/>
</dbReference>
<dbReference type="InterPro" id="IPR028893">
    <property type="entry name" value="A_deaminase"/>
</dbReference>
<dbReference type="InterPro" id="IPR001365">
    <property type="entry name" value="A_deaminase_dom"/>
</dbReference>
<dbReference type="InterPro" id="IPR006330">
    <property type="entry name" value="Ado/ade_deaminase"/>
</dbReference>
<dbReference type="InterPro" id="IPR032466">
    <property type="entry name" value="Metal_Hydrolase"/>
</dbReference>
<dbReference type="NCBIfam" id="TIGR01430">
    <property type="entry name" value="aden_deam"/>
    <property type="match status" value="1"/>
</dbReference>
<dbReference type="PANTHER" id="PTHR11409">
    <property type="entry name" value="ADENOSINE DEAMINASE"/>
    <property type="match status" value="1"/>
</dbReference>
<dbReference type="PANTHER" id="PTHR11409:SF43">
    <property type="entry name" value="ADENOSINE DEAMINASE"/>
    <property type="match status" value="1"/>
</dbReference>
<dbReference type="Pfam" id="PF00962">
    <property type="entry name" value="A_deaminase"/>
    <property type="match status" value="1"/>
</dbReference>
<dbReference type="SUPFAM" id="SSF51556">
    <property type="entry name" value="Metallo-dependent hydrolases"/>
    <property type="match status" value="1"/>
</dbReference>
<reference key="1">
    <citation type="submission" date="2007-06" db="EMBL/GenBank/DDBJ databases">
        <authorList>
            <person name="Brinkac L.M."/>
            <person name="Daugherty S."/>
            <person name="Dodson R.J."/>
            <person name="Madupu R."/>
            <person name="Brown J.L."/>
            <person name="Bruce D."/>
            <person name="Detter C."/>
            <person name="Munk C."/>
            <person name="Smith L.A."/>
            <person name="Smith T.J."/>
            <person name="White O."/>
            <person name="Brettin T.S."/>
        </authorList>
    </citation>
    <scope>NUCLEOTIDE SEQUENCE [LARGE SCALE GENOMIC DNA]</scope>
    <source>
        <strain>Langeland / NCTC 10281 / Type F</strain>
    </source>
</reference>
<feature type="chain" id="PRO_1000017656" description="Adenosine deaminase">
    <location>
        <begin position="1"/>
        <end position="335"/>
    </location>
</feature>
<feature type="active site" description="Proton donor" evidence="1">
    <location>
        <position position="200"/>
    </location>
</feature>
<feature type="binding site" evidence="1">
    <location>
        <position position="12"/>
    </location>
    <ligand>
        <name>Zn(2+)</name>
        <dbReference type="ChEBI" id="CHEBI:29105"/>
        <note>catalytic</note>
    </ligand>
</feature>
<feature type="binding site" evidence="1">
    <location>
        <position position="14"/>
    </location>
    <ligand>
        <name>substrate</name>
    </ligand>
</feature>
<feature type="binding site" evidence="1">
    <location>
        <position position="14"/>
    </location>
    <ligand>
        <name>Zn(2+)</name>
        <dbReference type="ChEBI" id="CHEBI:29105"/>
        <note>catalytic</note>
    </ligand>
</feature>
<feature type="binding site" evidence="1">
    <location>
        <position position="16"/>
    </location>
    <ligand>
        <name>substrate</name>
    </ligand>
</feature>
<feature type="binding site" evidence="1">
    <location>
        <position position="197"/>
    </location>
    <ligand>
        <name>Zn(2+)</name>
        <dbReference type="ChEBI" id="CHEBI:29105"/>
        <note>catalytic</note>
    </ligand>
</feature>
<feature type="binding site" evidence="1">
    <location>
        <position position="278"/>
    </location>
    <ligand>
        <name>Zn(2+)</name>
        <dbReference type="ChEBI" id="CHEBI:29105"/>
        <note>catalytic</note>
    </ligand>
</feature>
<feature type="site" description="Important for catalytic activity" evidence="1">
    <location>
        <position position="221"/>
    </location>
</feature>
<keyword id="KW-0378">Hydrolase</keyword>
<keyword id="KW-0479">Metal-binding</keyword>
<keyword id="KW-0546">Nucleotide metabolism</keyword>
<keyword id="KW-0862">Zinc</keyword>
<gene>
    <name evidence="1" type="primary">add</name>
    <name type="ordered locus">CLI_1072</name>
</gene>
<name>ADD_CLOBL</name>
<proteinExistence type="inferred from homology"/>